<gene>
    <name evidence="1" type="primary">rpl10</name>
    <name evidence="1" type="synonym">rplP0</name>
    <name type="ordered locus">TGAM_0488</name>
</gene>
<accession>C5A428</accession>
<comment type="function">
    <text evidence="1">Forms part of the ribosomal stalk, playing a central role in the interaction of the ribosome with GTP-bound translation factors.</text>
</comment>
<comment type="subunit">
    <text evidence="1">Part of the 50S ribosomal subunit. Forms part of the ribosomal stalk which helps the ribosome interact with GTP-bound translation factors. Forms a heptameric L10(L12)2(L12)2(L12)2 complex, where L10 forms an elongated spine to which the L12 dimers bind in a sequential fashion.</text>
</comment>
<comment type="similarity">
    <text evidence="1">Belongs to the universal ribosomal protein uL10 family.</text>
</comment>
<dbReference type="EMBL" id="CP001398">
    <property type="protein sequence ID" value="ACS32990.1"/>
    <property type="molecule type" value="Genomic_DNA"/>
</dbReference>
<dbReference type="RefSeq" id="WP_015858108.1">
    <property type="nucleotide sequence ID" value="NC_012804.1"/>
</dbReference>
<dbReference type="SMR" id="C5A428"/>
<dbReference type="STRING" id="593117.TGAM_0488"/>
<dbReference type="PaxDb" id="593117-TGAM_0488"/>
<dbReference type="GeneID" id="7987356"/>
<dbReference type="KEGG" id="tga:TGAM_0488"/>
<dbReference type="PATRIC" id="fig|593117.10.peg.484"/>
<dbReference type="eggNOG" id="arCOG04288">
    <property type="taxonomic scope" value="Archaea"/>
</dbReference>
<dbReference type="HOGENOM" id="CLU_053173_0_0_2"/>
<dbReference type="OrthoDB" id="30930at2157"/>
<dbReference type="Proteomes" id="UP000001488">
    <property type="component" value="Chromosome"/>
</dbReference>
<dbReference type="GO" id="GO:0022625">
    <property type="term" value="C:cytosolic large ribosomal subunit"/>
    <property type="evidence" value="ECO:0007669"/>
    <property type="project" value="TreeGrafter"/>
</dbReference>
<dbReference type="GO" id="GO:0070180">
    <property type="term" value="F:large ribosomal subunit rRNA binding"/>
    <property type="evidence" value="ECO:0007669"/>
    <property type="project" value="UniProtKB-UniRule"/>
</dbReference>
<dbReference type="GO" id="GO:0003735">
    <property type="term" value="F:structural constituent of ribosome"/>
    <property type="evidence" value="ECO:0007669"/>
    <property type="project" value="TreeGrafter"/>
</dbReference>
<dbReference type="GO" id="GO:0002181">
    <property type="term" value="P:cytoplasmic translation"/>
    <property type="evidence" value="ECO:0007669"/>
    <property type="project" value="TreeGrafter"/>
</dbReference>
<dbReference type="GO" id="GO:0000027">
    <property type="term" value="P:ribosomal large subunit assembly"/>
    <property type="evidence" value="ECO:0007669"/>
    <property type="project" value="TreeGrafter"/>
</dbReference>
<dbReference type="CDD" id="cd05795">
    <property type="entry name" value="Ribosomal_P0_L10e"/>
    <property type="match status" value="1"/>
</dbReference>
<dbReference type="FunFam" id="3.90.105.20:FF:000001">
    <property type="entry name" value="60S acidic ribosomal protein P0"/>
    <property type="match status" value="1"/>
</dbReference>
<dbReference type="Gene3D" id="3.30.70.1730">
    <property type="match status" value="1"/>
</dbReference>
<dbReference type="Gene3D" id="3.90.105.20">
    <property type="match status" value="1"/>
</dbReference>
<dbReference type="Gene3D" id="6.10.140.760">
    <property type="match status" value="1"/>
</dbReference>
<dbReference type="HAMAP" id="MF_00280">
    <property type="entry name" value="Ribosomal_uL10_arch"/>
    <property type="match status" value="1"/>
</dbReference>
<dbReference type="InterPro" id="IPR050323">
    <property type="entry name" value="Ribosomal_protein_uL10"/>
</dbReference>
<dbReference type="InterPro" id="IPR001790">
    <property type="entry name" value="Ribosomal_uL10"/>
</dbReference>
<dbReference type="InterPro" id="IPR040637">
    <property type="entry name" value="Ribosomal_uL10-like_insert"/>
</dbReference>
<dbReference type="InterPro" id="IPR043164">
    <property type="entry name" value="Ribosomal_uL10-like_insert_sf"/>
</dbReference>
<dbReference type="InterPro" id="IPR043141">
    <property type="entry name" value="Ribosomal_uL10-like_sf"/>
</dbReference>
<dbReference type="InterPro" id="IPR022909">
    <property type="entry name" value="Ribosomal_uL10_arc"/>
</dbReference>
<dbReference type="NCBIfam" id="NF003096">
    <property type="entry name" value="PRK04019.1-2"/>
    <property type="match status" value="1"/>
</dbReference>
<dbReference type="NCBIfam" id="NF003098">
    <property type="entry name" value="PRK04019.1-5"/>
    <property type="match status" value="1"/>
</dbReference>
<dbReference type="PANTHER" id="PTHR45699">
    <property type="entry name" value="60S ACIDIC RIBOSOMAL PROTEIN P0"/>
    <property type="match status" value="1"/>
</dbReference>
<dbReference type="PANTHER" id="PTHR45699:SF3">
    <property type="entry name" value="LARGE RIBOSOMAL SUBUNIT PROTEIN UL10"/>
    <property type="match status" value="1"/>
</dbReference>
<dbReference type="Pfam" id="PF00466">
    <property type="entry name" value="Ribosomal_L10"/>
    <property type="match status" value="1"/>
</dbReference>
<dbReference type="Pfam" id="PF17777">
    <property type="entry name" value="RL10P_insert"/>
    <property type="match status" value="1"/>
</dbReference>
<dbReference type="SUPFAM" id="SSF160369">
    <property type="entry name" value="Ribosomal protein L10-like"/>
    <property type="match status" value="1"/>
</dbReference>
<feature type="chain" id="PRO_1000204818" description="Large ribosomal subunit protein uL10">
    <location>
        <begin position="1"/>
        <end position="340"/>
    </location>
</feature>
<feature type="region of interest" description="Disordered" evidence="2">
    <location>
        <begin position="305"/>
        <end position="340"/>
    </location>
</feature>
<feature type="compositionally biased region" description="Acidic residues" evidence="2">
    <location>
        <begin position="312"/>
        <end position="331"/>
    </location>
</feature>
<sequence length="340" mass="37017">MAHVAEWKKKEVEELTKIIKSHPVIALVDVAGVPAYPLSKMRDKLRGKALLRVSRNTLIELAIKRAAQELNKPDLEKLADYIEGGAAILATEMNPFKLYKLLEESKTPAPAKPGAVVPKDVVIPAGPTSLAPGPLVGEMQALGIPARIEKGKVTIQKDYTVLKAGEVITEQLARILNALGIEPLEVGLNLLAAYEDDIIYTPDVLAIDEQEYINMLQQAYMHAFNLSVNTAYPTKQTIEAIIQKAYLGAKNVAVEAGYITPETVEDILGRAIRAFLLIAQNLPEELLDEKTKELLNAQAQVAVAAPQPAEEKVEEAEEEEEEEEEASEEEALAGLGALFG</sequence>
<name>RL10_THEGJ</name>
<evidence type="ECO:0000255" key="1">
    <source>
        <dbReference type="HAMAP-Rule" id="MF_00280"/>
    </source>
</evidence>
<evidence type="ECO:0000256" key="2">
    <source>
        <dbReference type="SAM" id="MobiDB-lite"/>
    </source>
</evidence>
<evidence type="ECO:0000305" key="3"/>
<organism>
    <name type="scientific">Thermococcus gammatolerans (strain DSM 15229 / JCM 11827 / EJ3)</name>
    <dbReference type="NCBI Taxonomy" id="593117"/>
    <lineage>
        <taxon>Archaea</taxon>
        <taxon>Methanobacteriati</taxon>
        <taxon>Methanobacteriota</taxon>
        <taxon>Thermococci</taxon>
        <taxon>Thermococcales</taxon>
        <taxon>Thermococcaceae</taxon>
        <taxon>Thermococcus</taxon>
    </lineage>
</organism>
<protein>
    <recommendedName>
        <fullName evidence="1">Large ribosomal subunit protein uL10</fullName>
    </recommendedName>
    <alternativeName>
        <fullName evidence="3">50S ribosomal protein L10</fullName>
    </alternativeName>
    <alternativeName>
        <fullName evidence="1">Acidic ribosomal protein P0 homolog</fullName>
    </alternativeName>
</protein>
<reference key="1">
    <citation type="journal article" date="2007" name="Genome Biol.">
        <title>Genome analysis and genome-wide proteomics of Thermococcus gammatolerans, the most radioresistant organism known amongst the Archaea.</title>
        <authorList>
            <person name="Zivanovic Y."/>
            <person name="Armengaud J."/>
            <person name="Lagorce A."/>
            <person name="Leplat C."/>
            <person name="Guerin P."/>
            <person name="Dutertre M."/>
            <person name="Anthouard V."/>
            <person name="Forterre P."/>
            <person name="Wincker P."/>
            <person name="Confalonieri F."/>
        </authorList>
    </citation>
    <scope>NUCLEOTIDE SEQUENCE [LARGE SCALE GENOMIC DNA]</scope>
    <source>
        <strain>DSM 15229 / JCM 11827 / EJ3</strain>
    </source>
</reference>
<keyword id="KW-1185">Reference proteome</keyword>
<keyword id="KW-0687">Ribonucleoprotein</keyword>
<keyword id="KW-0689">Ribosomal protein</keyword>
<keyword id="KW-0694">RNA-binding</keyword>
<keyword id="KW-0699">rRNA-binding</keyword>
<proteinExistence type="inferred from homology"/>